<evidence type="ECO:0000250" key="1"/>
<evidence type="ECO:0000250" key="2">
    <source>
        <dbReference type="UniProtKB" id="O02696"/>
    </source>
</evidence>
<evidence type="ECO:0000256" key="3">
    <source>
        <dbReference type="SAM" id="MobiDB-lite"/>
    </source>
</evidence>
<evidence type="ECO:0000269" key="4">
    <source>
    </source>
</evidence>
<evidence type="ECO:0000269" key="5">
    <source>
    </source>
</evidence>
<evidence type="ECO:0000269" key="6">
    <source>
    </source>
</evidence>
<evidence type="ECO:0000303" key="7">
    <source>
    </source>
</evidence>
<evidence type="ECO:0000305" key="8"/>
<evidence type="ECO:0007744" key="9">
    <source>
    </source>
</evidence>
<accession>Q8WYR1</accession>
<accession>B0LPH4</accession>
<accession>D3DTS3</accession>
<accession>Q5G936</accession>
<accession>Q5G938</accession>
<accession>Q5G939</accession>
<accession>Q8IZ23</accession>
<accession>Q9Y2Y2</accession>
<proteinExistence type="evidence at protein level"/>
<protein>
    <recommendedName>
        <fullName>Phosphoinositide 3-kinase regulatory subunit 5</fullName>
        <shortName>PI3-kinase regulatory subunit 5</shortName>
    </recommendedName>
    <alternativeName>
        <fullName>PI3-kinase p101 subunit</fullName>
    </alternativeName>
    <alternativeName>
        <fullName>Phosphatidylinositol 4,5-bisphosphate 3-kinase regulatory subunit</fullName>
        <shortName>PtdIns-3-kinase regulatory subunit</shortName>
    </alternativeName>
    <alternativeName>
        <fullName>Protein FOAP-2</fullName>
    </alternativeName>
    <alternativeName>
        <fullName>PtdIns-3-kinase p101</fullName>
    </alternativeName>
    <alternativeName>
        <fullName>p101-PI3K</fullName>
    </alternativeName>
</protein>
<feature type="chain" id="PRO_0000058421" description="Phosphoinositide 3-kinase regulatory subunit 5">
    <location>
        <begin position="1"/>
        <end position="880"/>
    </location>
</feature>
<feature type="region of interest" description="Heterodimerization" evidence="1">
    <location>
        <begin position="25"/>
        <end position="101"/>
    </location>
</feature>
<feature type="region of interest" description="Disordered" evidence="3">
    <location>
        <begin position="315"/>
        <end position="339"/>
    </location>
</feature>
<feature type="region of interest" description="Disordered" evidence="3">
    <location>
        <begin position="389"/>
        <end position="416"/>
    </location>
</feature>
<feature type="region of interest" description="Disordered" evidence="3">
    <location>
        <begin position="454"/>
        <end position="510"/>
    </location>
</feature>
<feature type="region of interest" description="Disordered" evidence="3">
    <location>
        <begin position="565"/>
        <end position="601"/>
    </location>
</feature>
<feature type="region of interest" description="Interaction with beta-gamma G protein dimers" evidence="1">
    <location>
        <begin position="653"/>
        <end position="753"/>
    </location>
</feature>
<feature type="compositionally biased region" description="Acidic residues" evidence="3">
    <location>
        <begin position="318"/>
        <end position="335"/>
    </location>
</feature>
<feature type="compositionally biased region" description="Pro residues" evidence="3">
    <location>
        <begin position="571"/>
        <end position="585"/>
    </location>
</feature>
<feature type="modified residue" description="N-acetylmethionine" evidence="2">
    <location>
        <position position="1"/>
    </location>
</feature>
<feature type="modified residue" description="Phosphoserine" evidence="9">
    <location>
        <position position="458"/>
    </location>
</feature>
<feature type="modified residue" description="Phosphoserine" evidence="9">
    <location>
        <position position="507"/>
    </location>
</feature>
<feature type="splice variant" id="VSP_016388" description="In isoform 2." evidence="7">
    <location>
        <begin position="1"/>
        <end position="386"/>
    </location>
</feature>
<feature type="sequence variant" id="VAR_036227" description="In a colorectal cancer sample; somatic mutation; dbSNP:rs371789171." evidence="5">
    <original>R</original>
    <variation>C</variation>
    <location>
        <position position="28"/>
    </location>
</feature>
<feature type="sequence variant" id="VAR_067052" description="In AOA3; dbSNP:rs61761068." evidence="6">
    <original>P</original>
    <variation>S</variation>
    <location>
        <position position="629"/>
    </location>
</feature>
<feature type="sequence conflict" description="In Ref. 6; AAW63122." evidence="8" ref="6">
    <original>H</original>
    <variation>L</variation>
    <location>
        <position position="15"/>
    </location>
</feature>
<feature type="sequence conflict" description="In Ref. 6; AAW63122." evidence="8" ref="6">
    <original>R</original>
    <variation>C</variation>
    <location>
        <position position="29"/>
    </location>
</feature>
<feature type="sequence conflict" description="In Ref. 6; AAW63122." evidence="8" ref="6">
    <original>L</original>
    <variation>Q</variation>
    <location>
        <position position="47"/>
    </location>
</feature>
<feature type="sequence conflict" description="In Ref. 6; AAW63122." evidence="8" ref="6">
    <original>F</original>
    <variation>L</variation>
    <location>
        <position position="95"/>
    </location>
</feature>
<feature type="sequence conflict" description="In Ref. 6; AAW63122." evidence="8" ref="6">
    <original>V</original>
    <variation>E</variation>
    <location>
        <position position="171"/>
    </location>
</feature>
<feature type="sequence conflict" description="In Ref. 6; AAW63122." evidence="8" ref="6">
    <original>AKTLAELEDIFTETAEAQELASGIGDAAEARRWLRTKLQAVGEKAGFPGVLDTAKPGKLHTIPIPVARCYTYSWSQDS</original>
    <variation>TLQNQGSSIPSPSLSPGATPTAGARTALTSCRKSCSRNRSCSSQGSWEMMKRRKRRRRRWRRTWKLMGTVPREIPCSP</variation>
    <location>
        <begin position="220"/>
        <end position="297"/>
    </location>
</feature>
<feature type="sequence conflict" description="In Ref. 6; AAW63121." evidence="8" ref="6">
    <original>DILQEILLKEQELLQPGILGDDEEEEEEEEEVEEDLETDGHCAERDSLLSTSSLASHDSTLSLASSQASG</original>
    <variation>GNIEGDPGPRRPDSAGLASLQTSCRKSCSRNRSYSSQGSWEMMKRRERRRRRWRRTWKLTGTVPREIPCS</variation>
    <location>
        <begin position="299"/>
        <end position="368"/>
    </location>
</feature>
<feature type="sequence conflict" description="In Ref. 2; AAD33397." evidence="8" ref="2">
    <original>V</original>
    <variation>L</variation>
    <location>
        <position position="674"/>
    </location>
</feature>
<comment type="function">
    <text evidence="1">Regulatory subunit of the PI3K gamma complex. Required for recruitment of the catalytic subunit to the plasma membrane via interaction with beta-gamma G protein dimers. Required for G protein-mediated activation of PIK3CG (By similarity).</text>
</comment>
<comment type="activity regulation">
    <text evidence="1">Greatly activated by G gamma proteins.</text>
</comment>
<comment type="subunit">
    <text evidence="4">Heterodimer of a catalytic subunit (PIK3CG/p120) and a regulatory (PIK3R5a/p101) subunit. Interacts with beta-gamma G protein dimers.</text>
</comment>
<comment type="subcellular location">
    <subcellularLocation>
        <location evidence="2">Nucleus</location>
    </subcellularLocation>
    <subcellularLocation>
        <location evidence="2">Cytoplasm</location>
    </subcellularLocation>
    <subcellularLocation>
        <location evidence="2">Cell membrane</location>
        <topology evidence="2">Peripheral membrane protein</topology>
    </subcellularLocation>
    <text evidence="2">Predominantly localized in the nucleus in absence of PIK3CG/p120. Colocalizes with PIK3CG/p120 in the cytoplasm. Translocated to the plasma membrane in a beta-gamma G protein-dependent manner.</text>
</comment>
<comment type="alternative products">
    <event type="alternative splicing"/>
    <isoform>
        <id>Q8WYR1-1</id>
        <name>1</name>
        <sequence type="displayed"/>
    </isoform>
    <isoform>
        <id>Q8WYR1-2</id>
        <name>2</name>
        <sequence type="described" ref="VSP_016388"/>
    </isoform>
</comment>
<comment type="tissue specificity">
    <text evidence="4 6">Ubiquitously expressed with high expression in fetal brain compared to adult brain. Abundant expression is observed in cerebellum, cerebral cortex, cerebral meninges, and vermis cerebelli.</text>
</comment>
<comment type="domain">
    <text>The heterodimerization region allows the binding to the catalytic subunit.</text>
</comment>
<comment type="disease" evidence="6">
    <disease id="DI-03724">
        <name>Ataxia-oculomotor apraxia 3</name>
        <acronym>AOA3</acronym>
        <description>An autosomal recessive disease characterized by cerebellar ataxia, oculomotor apraxia, areflexia and peripheral neuropathy.</description>
        <dbReference type="MIM" id="615217"/>
    </disease>
    <text>The disease is caused by variants affecting the gene represented in this entry.</text>
</comment>
<keyword id="KW-0007">Acetylation</keyword>
<keyword id="KW-0025">Alternative splicing</keyword>
<keyword id="KW-1003">Cell membrane</keyword>
<keyword id="KW-0963">Cytoplasm</keyword>
<keyword id="KW-0225">Disease variant</keyword>
<keyword id="KW-0472">Membrane</keyword>
<keyword id="KW-0523">Neurodegeneration</keyword>
<keyword id="KW-0539">Nucleus</keyword>
<keyword id="KW-0597">Phosphoprotein</keyword>
<keyword id="KW-1267">Proteomics identification</keyword>
<keyword id="KW-1185">Reference proteome</keyword>
<dbReference type="EMBL" id="AB028925">
    <property type="protein sequence ID" value="BAB82464.1"/>
    <property type="molecule type" value="mRNA"/>
</dbReference>
<dbReference type="EMBL" id="AF128881">
    <property type="protein sequence ID" value="AAD33397.1"/>
    <property type="molecule type" value="mRNA"/>
</dbReference>
<dbReference type="EMBL" id="EU332864">
    <property type="protein sequence ID" value="ABY87553.1"/>
    <property type="molecule type" value="Genomic_DNA"/>
</dbReference>
<dbReference type="EMBL" id="CH471108">
    <property type="protein sequence ID" value="EAW90035.1"/>
    <property type="molecule type" value="Genomic_DNA"/>
</dbReference>
<dbReference type="EMBL" id="CH471108">
    <property type="protein sequence ID" value="EAW90036.1"/>
    <property type="molecule type" value="Genomic_DNA"/>
</dbReference>
<dbReference type="EMBL" id="BC028212">
    <property type="protein sequence ID" value="AAH28212.1"/>
    <property type="molecule type" value="mRNA"/>
</dbReference>
<dbReference type="EMBL" id="AY725851">
    <property type="protein sequence ID" value="AAW63121.1"/>
    <property type="molecule type" value="mRNA"/>
</dbReference>
<dbReference type="EMBL" id="AY725852">
    <property type="protein sequence ID" value="AAW63122.1"/>
    <property type="molecule type" value="mRNA"/>
</dbReference>
<dbReference type="EMBL" id="AY725853">
    <property type="protein sequence ID" value="AAW63123.1"/>
    <property type="molecule type" value="mRNA"/>
</dbReference>
<dbReference type="EMBL" id="AY725854">
    <property type="protein sequence ID" value="AAW63124.1"/>
    <property type="molecule type" value="mRNA"/>
</dbReference>
<dbReference type="CCDS" id="CCDS11147.1">
    <molecule id="Q8WYR1-1"/>
</dbReference>
<dbReference type="CCDS" id="CCDS73986.1">
    <molecule id="Q8WYR1-2"/>
</dbReference>
<dbReference type="RefSeq" id="NP_001136105.1">
    <molecule id="Q8WYR1-1"/>
    <property type="nucleotide sequence ID" value="NM_001142633.3"/>
</dbReference>
<dbReference type="RefSeq" id="NP_001238780.1">
    <molecule id="Q8WYR1-2"/>
    <property type="nucleotide sequence ID" value="NM_001251851.2"/>
</dbReference>
<dbReference type="RefSeq" id="NP_001238781.1">
    <molecule id="Q8WYR1-2"/>
    <property type="nucleotide sequence ID" value="NM_001251852.2"/>
</dbReference>
<dbReference type="RefSeq" id="NP_001238782.1">
    <molecule id="Q8WYR1-2"/>
    <property type="nucleotide sequence ID" value="NM_001251853.2"/>
</dbReference>
<dbReference type="RefSeq" id="NP_001238784.1">
    <molecule id="Q8WYR1-2"/>
    <property type="nucleotide sequence ID" value="NM_001251855.2"/>
</dbReference>
<dbReference type="RefSeq" id="NP_001375326.1">
    <molecule id="Q8WYR1-2"/>
    <property type="nucleotide sequence ID" value="NM_001388397.1"/>
</dbReference>
<dbReference type="RefSeq" id="NP_001375327.1">
    <molecule id="Q8WYR1-2"/>
    <property type="nucleotide sequence ID" value="NM_001388398.1"/>
</dbReference>
<dbReference type="RefSeq" id="NP_001375328.1">
    <molecule id="Q8WYR1-2"/>
    <property type="nucleotide sequence ID" value="NM_001388399.1"/>
</dbReference>
<dbReference type="RefSeq" id="NP_055123.2">
    <molecule id="Q8WYR1-1"/>
    <property type="nucleotide sequence ID" value="NM_014308.4"/>
</dbReference>
<dbReference type="RefSeq" id="XP_047291665.1">
    <molecule id="Q8WYR1-1"/>
    <property type="nucleotide sequence ID" value="XM_047435709.1"/>
</dbReference>
<dbReference type="RefSeq" id="XP_054171606.1">
    <molecule id="Q8WYR1-1"/>
    <property type="nucleotide sequence ID" value="XM_054315631.1"/>
</dbReference>
<dbReference type="SMR" id="Q8WYR1"/>
<dbReference type="BioGRID" id="117079">
    <property type="interactions" value="10"/>
</dbReference>
<dbReference type="ComplexPortal" id="CPX-5986">
    <property type="entry name" value="Phosphatidylinositol 3-kinase complex class IB, p110gamma/p101"/>
</dbReference>
<dbReference type="CORUM" id="Q8WYR1"/>
<dbReference type="FunCoup" id="Q8WYR1">
    <property type="interactions" value="927"/>
</dbReference>
<dbReference type="IntAct" id="Q8WYR1">
    <property type="interactions" value="8"/>
</dbReference>
<dbReference type="MINT" id="Q8WYR1"/>
<dbReference type="STRING" id="9606.ENSP00000392812"/>
<dbReference type="BindingDB" id="Q8WYR1"/>
<dbReference type="ChEMBL" id="CHEMBL3430881"/>
<dbReference type="iPTMnet" id="Q8WYR1"/>
<dbReference type="PhosphoSitePlus" id="Q8WYR1"/>
<dbReference type="BioMuta" id="PIK3R5"/>
<dbReference type="DMDM" id="74716480"/>
<dbReference type="jPOST" id="Q8WYR1"/>
<dbReference type="MassIVE" id="Q8WYR1"/>
<dbReference type="PaxDb" id="9606-ENSP00000392812"/>
<dbReference type="PeptideAtlas" id="Q8WYR1"/>
<dbReference type="ProteomicsDB" id="75194">
    <molecule id="Q8WYR1-1"/>
</dbReference>
<dbReference type="ProteomicsDB" id="75195">
    <molecule id="Q8WYR1-2"/>
</dbReference>
<dbReference type="Antibodypedia" id="24754">
    <property type="antibodies" value="452 antibodies from 31 providers"/>
</dbReference>
<dbReference type="DNASU" id="23533"/>
<dbReference type="Ensembl" id="ENST00000447110.6">
    <molecule id="Q8WYR1-1"/>
    <property type="protein sequence ID" value="ENSP00000392812.1"/>
    <property type="gene ID" value="ENSG00000141506.15"/>
</dbReference>
<dbReference type="Ensembl" id="ENST00000581552.5">
    <molecule id="Q8WYR1-1"/>
    <property type="protein sequence ID" value="ENSP00000462433.1"/>
    <property type="gene ID" value="ENSG00000141506.15"/>
</dbReference>
<dbReference type="Ensembl" id="ENST00000611902.4">
    <molecule id="Q8WYR1-2"/>
    <property type="protein sequence ID" value="ENSP00000477795.1"/>
    <property type="gene ID" value="ENSG00000141506.15"/>
</dbReference>
<dbReference type="Ensembl" id="ENST00000616147.4">
    <molecule id="Q8WYR1-2"/>
    <property type="protein sequence ID" value="ENSP00000484211.1"/>
    <property type="gene ID" value="ENSG00000141506.15"/>
</dbReference>
<dbReference type="Ensembl" id="ENST00000623421.3">
    <molecule id="Q8WYR1-2"/>
    <property type="protein sequence ID" value="ENSP00000485280.1"/>
    <property type="gene ID" value="ENSG00000141506.15"/>
</dbReference>
<dbReference type="GeneID" id="23533"/>
<dbReference type="KEGG" id="hsa:23533"/>
<dbReference type="MANE-Select" id="ENST00000447110.6">
    <property type="protein sequence ID" value="ENSP00000392812.1"/>
    <property type="RefSeq nucleotide sequence ID" value="NM_001142633.3"/>
    <property type="RefSeq protein sequence ID" value="NP_001136105.1"/>
</dbReference>
<dbReference type="UCSC" id="uc002glt.4">
    <molecule id="Q8WYR1-1"/>
    <property type="organism name" value="human"/>
</dbReference>
<dbReference type="AGR" id="HGNC:30035"/>
<dbReference type="CTD" id="23533"/>
<dbReference type="DisGeNET" id="23533"/>
<dbReference type="GeneCards" id="PIK3R5"/>
<dbReference type="HGNC" id="HGNC:30035">
    <property type="gene designation" value="PIK3R5"/>
</dbReference>
<dbReference type="HPA" id="ENSG00000141506">
    <property type="expression patterns" value="Tissue enriched (bone)"/>
</dbReference>
<dbReference type="MalaCards" id="PIK3R5"/>
<dbReference type="MIM" id="611317">
    <property type="type" value="gene"/>
</dbReference>
<dbReference type="MIM" id="615217">
    <property type="type" value="phenotype"/>
</dbReference>
<dbReference type="neXtProt" id="NX_Q8WYR1"/>
<dbReference type="OpenTargets" id="ENSG00000141506"/>
<dbReference type="Orphanet" id="64753">
    <property type="disease" value="Spinocerebellar ataxia with axonal neuropathy type 2"/>
</dbReference>
<dbReference type="PharmGKB" id="PA134890823"/>
<dbReference type="VEuPathDB" id="HostDB:ENSG00000141506"/>
<dbReference type="eggNOG" id="ENOG502QV4A">
    <property type="taxonomic scope" value="Eukaryota"/>
</dbReference>
<dbReference type="GeneTree" id="ENSGT00530000063753"/>
<dbReference type="HOGENOM" id="CLU_337590_0_0_1"/>
<dbReference type="InParanoid" id="Q8WYR1"/>
<dbReference type="OMA" id="VLCQHSL"/>
<dbReference type="OrthoDB" id="9932678at2759"/>
<dbReference type="PAN-GO" id="Q8WYR1">
    <property type="GO annotations" value="4 GO annotations based on evolutionary models"/>
</dbReference>
<dbReference type="PhylomeDB" id="Q8WYR1"/>
<dbReference type="TreeFam" id="TF102035"/>
<dbReference type="BioCyc" id="MetaCyc:HS13887-MONOMER"/>
<dbReference type="PathwayCommons" id="Q8WYR1"/>
<dbReference type="Reactome" id="R-HSA-114604">
    <property type="pathway name" value="GPVI-mediated activation cascade"/>
</dbReference>
<dbReference type="Reactome" id="R-HSA-1257604">
    <property type="pathway name" value="PIP3 activates AKT signaling"/>
</dbReference>
<dbReference type="Reactome" id="R-HSA-1660499">
    <property type="pathway name" value="Synthesis of PIPs at the plasma membrane"/>
</dbReference>
<dbReference type="Reactome" id="R-HSA-2219530">
    <property type="pathway name" value="Constitutive Signaling by Aberrant PI3K in Cancer"/>
</dbReference>
<dbReference type="Reactome" id="R-HSA-389357">
    <property type="pathway name" value="CD28 dependent PI3K/Akt signaling"/>
</dbReference>
<dbReference type="Reactome" id="R-HSA-392451">
    <property type="pathway name" value="G beta:gamma signalling through PI3Kgamma"/>
</dbReference>
<dbReference type="Reactome" id="R-HSA-6811558">
    <property type="pathway name" value="PI5P, PP2A and IER3 Regulate PI3K/AKT Signaling"/>
</dbReference>
<dbReference type="Reactome" id="R-HSA-9027276">
    <property type="pathway name" value="Erythropoietin activates Phosphoinositide-3-kinase (PI3K)"/>
</dbReference>
<dbReference type="Reactome" id="R-HSA-9927354">
    <property type="pathway name" value="Co-stimulation by ICOS"/>
</dbReference>
<dbReference type="SignaLink" id="Q8WYR1"/>
<dbReference type="BioGRID-ORCS" id="23533">
    <property type="hits" value="21 hits in 1152 CRISPR screens"/>
</dbReference>
<dbReference type="ChiTaRS" id="PIK3R5">
    <property type="organism name" value="human"/>
</dbReference>
<dbReference type="GeneWiki" id="PIK3R5"/>
<dbReference type="GenomeRNAi" id="23533"/>
<dbReference type="Pharos" id="Q8WYR1">
    <property type="development level" value="Tbio"/>
</dbReference>
<dbReference type="PRO" id="PR:Q8WYR1"/>
<dbReference type="Proteomes" id="UP000005640">
    <property type="component" value="Chromosome 17"/>
</dbReference>
<dbReference type="RNAct" id="Q8WYR1">
    <property type="molecule type" value="protein"/>
</dbReference>
<dbReference type="Bgee" id="ENSG00000141506">
    <property type="expression patterns" value="Expressed in granulocyte and 132 other cell types or tissues"/>
</dbReference>
<dbReference type="ExpressionAtlas" id="Q8WYR1">
    <property type="expression patterns" value="baseline and differential"/>
</dbReference>
<dbReference type="GO" id="GO:0034451">
    <property type="term" value="C:centriolar satellite"/>
    <property type="evidence" value="ECO:0000314"/>
    <property type="project" value="HPA"/>
</dbReference>
<dbReference type="GO" id="GO:0005737">
    <property type="term" value="C:cytoplasm"/>
    <property type="evidence" value="ECO:0000250"/>
    <property type="project" value="UniProtKB"/>
</dbReference>
<dbReference type="GO" id="GO:0005829">
    <property type="term" value="C:cytosol"/>
    <property type="evidence" value="ECO:0000314"/>
    <property type="project" value="HPA"/>
</dbReference>
<dbReference type="GO" id="GO:0016020">
    <property type="term" value="C:membrane"/>
    <property type="evidence" value="ECO:0000250"/>
    <property type="project" value="UniProtKB"/>
</dbReference>
<dbReference type="GO" id="GO:0005634">
    <property type="term" value="C:nucleus"/>
    <property type="evidence" value="ECO:0007669"/>
    <property type="project" value="UniProtKB-SubCell"/>
</dbReference>
<dbReference type="GO" id="GO:0005942">
    <property type="term" value="C:phosphatidylinositol 3-kinase complex"/>
    <property type="evidence" value="ECO:0000318"/>
    <property type="project" value="GO_Central"/>
</dbReference>
<dbReference type="GO" id="GO:0005943">
    <property type="term" value="C:phosphatidylinositol 3-kinase complex, class IA"/>
    <property type="evidence" value="ECO:0000269"/>
    <property type="project" value="ComplexPortal"/>
</dbReference>
<dbReference type="GO" id="GO:0005944">
    <property type="term" value="C:phosphatidylinositol 3-kinase complex, class IB"/>
    <property type="evidence" value="ECO:0000250"/>
    <property type="project" value="UniProtKB"/>
</dbReference>
<dbReference type="GO" id="GO:0005886">
    <property type="term" value="C:plasma membrane"/>
    <property type="evidence" value="ECO:0007669"/>
    <property type="project" value="UniProtKB-SubCell"/>
</dbReference>
<dbReference type="GO" id="GO:0046935">
    <property type="term" value="F:1-phosphatidylinositol-3-kinase regulator activity"/>
    <property type="evidence" value="ECO:0000318"/>
    <property type="project" value="GO_Central"/>
</dbReference>
<dbReference type="GO" id="GO:0031683">
    <property type="term" value="F:G-protein beta/gamma-subunit complex binding"/>
    <property type="evidence" value="ECO:0000250"/>
    <property type="project" value="UniProtKB"/>
</dbReference>
<dbReference type="GO" id="GO:0007186">
    <property type="term" value="P:G protein-coupled receptor signaling pathway"/>
    <property type="evidence" value="ECO:0000269"/>
    <property type="project" value="ComplexPortal"/>
</dbReference>
<dbReference type="GO" id="GO:0006955">
    <property type="term" value="P:immune response"/>
    <property type="evidence" value="ECO:0000303"/>
    <property type="project" value="ComplexPortal"/>
</dbReference>
<dbReference type="GO" id="GO:0043491">
    <property type="term" value="P:phosphatidylinositol 3-kinase/protein kinase B signal transduction"/>
    <property type="evidence" value="ECO:0000250"/>
    <property type="project" value="UniProtKB"/>
</dbReference>
<dbReference type="GO" id="GO:0046488">
    <property type="term" value="P:phosphatidylinositol metabolic process"/>
    <property type="evidence" value="ECO:0007669"/>
    <property type="project" value="Ensembl"/>
</dbReference>
<dbReference type="GO" id="GO:0043406">
    <property type="term" value="P:positive regulation of MAP kinase activity"/>
    <property type="evidence" value="ECO:0000250"/>
    <property type="project" value="UniProtKB"/>
</dbReference>
<dbReference type="GO" id="GO:0051897">
    <property type="term" value="P:positive regulation of phosphatidylinositol 3-kinase/protein kinase B signal transduction"/>
    <property type="evidence" value="ECO:0000250"/>
    <property type="project" value="UniProtKB"/>
</dbReference>
<dbReference type="InterPro" id="IPR019522">
    <property type="entry name" value="PIK3R5/6"/>
</dbReference>
<dbReference type="PANTHER" id="PTHR15593">
    <property type="entry name" value="PHOSPHATIDYLINOSITOL 3-KINASE REGULATORY SUBUNIT"/>
    <property type="match status" value="1"/>
</dbReference>
<dbReference type="PANTHER" id="PTHR15593:SF2">
    <property type="entry name" value="PHOSPHOINOSITIDE 3-KINASE REGULATORY SUBUNIT 5"/>
    <property type="match status" value="1"/>
</dbReference>
<dbReference type="Pfam" id="PF10486">
    <property type="entry name" value="PI3K_1B_p101"/>
    <property type="match status" value="1"/>
</dbReference>
<reference key="1">
    <citation type="submission" date="1999-06" db="EMBL/GenBank/DDBJ databases">
        <title>Molecular cloning of a human novel gene, FOAP-2, which are highly expressed in macrophages.</title>
        <authorList>
            <person name="Yazaki M."/>
            <person name="Fujii Y."/>
            <person name="Tsuritani K."/>
            <person name="Yajima Y."/>
            <person name="Amemiya T."/>
            <person name="Ukai Y."/>
            <person name="Naito K."/>
            <person name="Kawaguchi A."/>
            <person name="Takayama K."/>
        </authorList>
    </citation>
    <scope>NUCLEOTIDE SEQUENCE [MRNA] (ISOFORM 1)</scope>
</reference>
<reference key="2">
    <citation type="submission" date="1999-02" db="EMBL/GenBank/DDBJ databases">
        <title>G-beta gamma regulated phosphatidylinositol 3-kinase.</title>
        <authorList>
            <person name="Stephens L."/>
            <person name="Hawkins P.T."/>
            <person name="Braselmann S."/>
        </authorList>
    </citation>
    <scope>NUCLEOTIDE SEQUENCE [MRNA] (ISOFORM 1)</scope>
</reference>
<reference key="3">
    <citation type="submission" date="2007-12" db="EMBL/GenBank/DDBJ databases">
        <authorList>
            <consortium name="SeattleSNPs variation discovery resource"/>
        </authorList>
    </citation>
    <scope>NUCLEOTIDE SEQUENCE [GENOMIC DNA]</scope>
</reference>
<reference key="4">
    <citation type="submission" date="2005-09" db="EMBL/GenBank/DDBJ databases">
        <authorList>
            <person name="Mural R.J."/>
            <person name="Istrail S."/>
            <person name="Sutton G.G."/>
            <person name="Florea L."/>
            <person name="Halpern A.L."/>
            <person name="Mobarry C.M."/>
            <person name="Lippert R."/>
            <person name="Walenz B."/>
            <person name="Shatkay H."/>
            <person name="Dew I."/>
            <person name="Miller J.R."/>
            <person name="Flanigan M.J."/>
            <person name="Edwards N.J."/>
            <person name="Bolanos R."/>
            <person name="Fasulo D."/>
            <person name="Halldorsson B.V."/>
            <person name="Hannenhalli S."/>
            <person name="Turner R."/>
            <person name="Yooseph S."/>
            <person name="Lu F."/>
            <person name="Nusskern D.R."/>
            <person name="Shue B.C."/>
            <person name="Zheng X.H."/>
            <person name="Zhong F."/>
            <person name="Delcher A.L."/>
            <person name="Huson D.H."/>
            <person name="Kravitz S.A."/>
            <person name="Mouchard L."/>
            <person name="Reinert K."/>
            <person name="Remington K.A."/>
            <person name="Clark A.G."/>
            <person name="Waterman M.S."/>
            <person name="Eichler E.E."/>
            <person name="Adams M.D."/>
            <person name="Hunkapiller M.W."/>
            <person name="Myers E.W."/>
            <person name="Venter J.C."/>
        </authorList>
    </citation>
    <scope>NUCLEOTIDE SEQUENCE [LARGE SCALE GENOMIC DNA]</scope>
</reference>
<reference key="5">
    <citation type="journal article" date="2004" name="Genome Res.">
        <title>The status, quality, and expansion of the NIH full-length cDNA project: the Mammalian Gene Collection (MGC).</title>
        <authorList>
            <consortium name="The MGC Project Team"/>
        </authorList>
    </citation>
    <scope>NUCLEOTIDE SEQUENCE [LARGE SCALE MRNA] (ISOFORM 2)</scope>
    <source>
        <tissue>Blood</tissue>
    </source>
</reference>
<reference key="6">
    <citation type="submission" date="2004-08" db="EMBL/GenBank/DDBJ databases">
        <title>Identification of alternative transcripts of human P101-PI3K.</title>
        <authorList>
            <person name="Reichwald K."/>
            <person name="Gausmann U."/>
            <person name="Karagyozov L."/>
            <person name="Platzer M."/>
        </authorList>
    </citation>
    <scope>NUCLEOTIDE SEQUENCE [MRNA] OF 1-369 (ISOFORM 1)</scope>
    <source>
        <tissue>Peripheral blood leukocyte</tissue>
        <tissue>Spleen</tissue>
    </source>
</reference>
<reference key="7">
    <citation type="journal article" date="2005" name="Curr. Biol.">
        <title>p84, a new Gbetagamma-activated regulatory subunit of the type IB phosphoinositide 3-kinase p110gamma.</title>
        <authorList>
            <person name="Suire S."/>
            <person name="Coadwell J."/>
            <person name="Ferguson G.J."/>
            <person name="Davidson K."/>
            <person name="Hawkins P."/>
            <person name="Stephens L."/>
        </authorList>
    </citation>
    <scope>INTERACTION WITH PIK3CG</scope>
    <scope>TISSUE SPECIFICITY</scope>
</reference>
<reference key="8">
    <citation type="journal article" date="2009" name="Mol. Cell. Proteomics">
        <title>Large-scale proteomics analysis of the human kinome.</title>
        <authorList>
            <person name="Oppermann F.S."/>
            <person name="Gnad F."/>
            <person name="Olsen J.V."/>
            <person name="Hornberger R."/>
            <person name="Greff Z."/>
            <person name="Keri G."/>
            <person name="Mann M."/>
            <person name="Daub H."/>
        </authorList>
    </citation>
    <scope>PHOSPHORYLATION [LARGE SCALE ANALYSIS] AT SER-458 AND SER-507</scope>
    <scope>IDENTIFICATION BY MASS SPECTROMETRY [LARGE SCALE ANALYSIS]</scope>
</reference>
<reference key="9">
    <citation type="journal article" date="2012" name="Hum. Mutat.">
        <title>A missense mutation in PIK3R5 gene in a family with ataxia and oculomotor apraxia.</title>
        <authorList>
            <person name="Tassan N.A."/>
            <person name="Khalil D."/>
            <person name="Shinwari J."/>
            <person name="Sharif L.A."/>
            <person name="Bavi P."/>
            <person name="Abduljaleel Z."/>
            <person name="Abu Dhaim N."/>
            <person name="Magrashi A."/>
            <person name="Bobis S."/>
            <person name="Ahmed H."/>
            <person name="Alahmed S."/>
            <person name="Bohlega S."/>
        </authorList>
    </citation>
    <scope>TISSUE SPECIFICITY</scope>
    <scope>VARIANT AOA3 SER-629</scope>
</reference>
<reference key="10">
    <citation type="journal article" date="2006" name="Science">
        <title>The consensus coding sequences of human breast and colorectal cancers.</title>
        <authorList>
            <person name="Sjoeblom T."/>
            <person name="Jones S."/>
            <person name="Wood L.D."/>
            <person name="Parsons D.W."/>
            <person name="Lin J."/>
            <person name="Barber T.D."/>
            <person name="Mandelker D."/>
            <person name="Leary R.J."/>
            <person name="Ptak J."/>
            <person name="Silliman N."/>
            <person name="Szabo S."/>
            <person name="Buckhaults P."/>
            <person name="Farrell C."/>
            <person name="Meeh P."/>
            <person name="Markowitz S.D."/>
            <person name="Willis J."/>
            <person name="Dawson D."/>
            <person name="Willson J.K.V."/>
            <person name="Gazdar A.F."/>
            <person name="Hartigan J."/>
            <person name="Wu L."/>
            <person name="Liu C."/>
            <person name="Parmigiani G."/>
            <person name="Park B.H."/>
            <person name="Bachman K.E."/>
            <person name="Papadopoulos N."/>
            <person name="Vogelstein B."/>
            <person name="Kinzler K.W."/>
            <person name="Velculescu V.E."/>
        </authorList>
    </citation>
    <scope>VARIANT [LARGE SCALE ANALYSIS] CYS-28</scope>
</reference>
<organism>
    <name type="scientific">Homo sapiens</name>
    <name type="common">Human</name>
    <dbReference type="NCBI Taxonomy" id="9606"/>
    <lineage>
        <taxon>Eukaryota</taxon>
        <taxon>Metazoa</taxon>
        <taxon>Chordata</taxon>
        <taxon>Craniata</taxon>
        <taxon>Vertebrata</taxon>
        <taxon>Euteleostomi</taxon>
        <taxon>Mammalia</taxon>
        <taxon>Eutheria</taxon>
        <taxon>Euarchontoglires</taxon>
        <taxon>Primates</taxon>
        <taxon>Haplorrhini</taxon>
        <taxon>Catarrhini</taxon>
        <taxon>Hominidae</taxon>
        <taxon>Homo</taxon>
    </lineage>
</organism>
<sequence length="880" mass="97348">MQPGATTCTEDRIQHALERCLHGLSLSRRSTSWSAGLCLNCWSLQELVSRDPGHFLILLEQILQKTREVQEKGTYDLLTPLALLFYSTVLCTPHFPPDSDLLLKAASTYHRFLTWPVPYCSICQELLTFIDAELKAPGISYQRLVRAEQGLPIRSHRSSTVTVLLLNPVEVQAEFLAVANKLSTPGHSPHSAYTTLLLHAFQATFGAHCDVPGLHCRLQAKTLAELEDIFTETAEAQELASGIGDAAEARRWLRTKLQAVGEKAGFPGVLDTAKPGKLHTIPIPVARCYTYSWSQDSFDILQEILLKEQELLQPGILGDDEEEEEEEEEVEEDLETDGHCAERDSLLSTSSLASHDSTLSLASSQASGPALSRHLLTSFVSGLSDGMDSGYVEDSEESSSEWPWRRGSQERRGHRRPGQKFIRIYKLFKSTSQLVLRRDSRSLEGSSDTALPLRRAGSLCSPLDEPVSPPSRAQRSRSLPQPKLGTQLPSWLLAPASRPQRRRPFLSGDEDPKASTLRVVVFGSDRISGKVARAYSNLRRLENNRPLLTRFFKLQFFYVPVKRSHGTSPGACPPPRSQTPSPPTDSPRHASPGELGTTPWEESTNDISHYLGMLDPWYERNVLGLMHLPPEVLCQQSLKAEAQALEGSPTQLPILADMLLYYCRFAARPVLLQVYQTELTFITGEKTTEIFIHSLELGHSAATRAIKASGPGSKRLGIDGDREAVPLTLQIIYSKGAISGRSRWSNLEKVCTSVNLNKACRKQEELDSSMEALTLNLTEVVKRQNSKSKKGFNQISTSQIKVDKVQIIGSNSCPFAVCLDQDERKILQSVVRCEVSPCYKPEKSDLSSPPQTPPDLPAQAAPDLCSLLCLPIMTFSGALP</sequence>
<gene>
    <name type="primary">PIK3R5</name>
</gene>
<name>PI3R5_HUMAN</name>